<protein>
    <recommendedName>
        <fullName evidence="1">Putative pterin-4-alpha-carbinolamine dehydratase</fullName>
        <shortName evidence="1">PHS</shortName>
        <ecNumber evidence="1">4.2.1.96</ecNumber>
    </recommendedName>
    <alternativeName>
        <fullName evidence="1">4-alpha-hydroxy-tetrahydropterin dehydratase</fullName>
    </alternativeName>
    <alternativeName>
        <fullName evidence="1">Pterin carbinolamine dehydratase</fullName>
        <shortName evidence="1">PCD</shortName>
    </alternativeName>
</protein>
<feature type="chain" id="PRO_0000231455" description="Putative pterin-4-alpha-carbinolamine dehydratase">
    <location>
        <begin position="1"/>
        <end position="113"/>
    </location>
</feature>
<evidence type="ECO:0000255" key="1">
    <source>
        <dbReference type="HAMAP-Rule" id="MF_00434"/>
    </source>
</evidence>
<keyword id="KW-0456">Lyase</keyword>
<keyword id="KW-1185">Reference proteome</keyword>
<organism>
    <name type="scientific">Nitrosococcus oceani (strain ATCC 19707 / BCRC 17464 / JCM 30415 / NCIMB 11848 / C-107)</name>
    <dbReference type="NCBI Taxonomy" id="323261"/>
    <lineage>
        <taxon>Bacteria</taxon>
        <taxon>Pseudomonadati</taxon>
        <taxon>Pseudomonadota</taxon>
        <taxon>Gammaproteobacteria</taxon>
        <taxon>Chromatiales</taxon>
        <taxon>Chromatiaceae</taxon>
        <taxon>Nitrosococcus</taxon>
    </lineage>
</organism>
<name>PHS_NITOC</name>
<comment type="catalytic activity">
    <reaction evidence="1">
        <text>(4aS,6R)-4a-hydroxy-L-erythro-5,6,7,8-tetrahydrobiopterin = (6R)-L-erythro-6,7-dihydrobiopterin + H2O</text>
        <dbReference type="Rhea" id="RHEA:11920"/>
        <dbReference type="ChEBI" id="CHEBI:15377"/>
        <dbReference type="ChEBI" id="CHEBI:15642"/>
        <dbReference type="ChEBI" id="CHEBI:43120"/>
        <dbReference type="EC" id="4.2.1.96"/>
    </reaction>
</comment>
<comment type="similarity">
    <text evidence="1">Belongs to the pterin-4-alpha-carbinolamine dehydratase family.</text>
</comment>
<reference key="1">
    <citation type="journal article" date="2006" name="Appl. Environ. Microbiol.">
        <title>Complete genome sequence of the marine, chemolithoautotrophic, ammonia-oxidizing bacterium Nitrosococcus oceani ATCC 19707.</title>
        <authorList>
            <person name="Klotz M.G."/>
            <person name="Arp D.J."/>
            <person name="Chain P.S.G."/>
            <person name="El-Sheikh A.F."/>
            <person name="Hauser L.J."/>
            <person name="Hommes N.G."/>
            <person name="Larimer F.W."/>
            <person name="Malfatti S.A."/>
            <person name="Norton J.M."/>
            <person name="Poret-Peterson A.T."/>
            <person name="Vergez L.M."/>
            <person name="Ward B.B."/>
        </authorList>
    </citation>
    <scope>NUCLEOTIDE SEQUENCE [LARGE SCALE GENOMIC DNA]</scope>
    <source>
        <strain>ATCC 19707 / BCRC 17464 / JCM 30415 / NCIMB 11848 / C-107</strain>
    </source>
</reference>
<sequence>MEDLSTMQCEACRPEAPRVSEDEIRELHPQVPDWEIIEEDEVRRLQRVFKFGNFAEALDFTNKTGALAEEAGHHPAILTEYGQVTVTWWSHKIKGLHKNDFIMAAKTDQLLKH</sequence>
<accession>Q3J910</accession>
<dbReference type="EC" id="4.2.1.96" evidence="1"/>
<dbReference type="EMBL" id="CP000127">
    <property type="protein sequence ID" value="ABA58686.1"/>
    <property type="molecule type" value="Genomic_DNA"/>
</dbReference>
<dbReference type="RefSeq" id="WP_002810485.1">
    <property type="nucleotide sequence ID" value="NC_007484.1"/>
</dbReference>
<dbReference type="SMR" id="Q3J910"/>
<dbReference type="STRING" id="323261.Noc_2226"/>
<dbReference type="KEGG" id="noc:Noc_2226"/>
<dbReference type="eggNOG" id="COG2154">
    <property type="taxonomic scope" value="Bacteria"/>
</dbReference>
<dbReference type="HOGENOM" id="CLU_081974_2_2_6"/>
<dbReference type="InParanoid" id="Q3J910"/>
<dbReference type="Proteomes" id="UP000006838">
    <property type="component" value="Chromosome"/>
</dbReference>
<dbReference type="GO" id="GO:0008124">
    <property type="term" value="F:4-alpha-hydroxytetrahydrobiopterin dehydratase activity"/>
    <property type="evidence" value="ECO:0007669"/>
    <property type="project" value="UniProtKB-UniRule"/>
</dbReference>
<dbReference type="GO" id="GO:0006729">
    <property type="term" value="P:tetrahydrobiopterin biosynthetic process"/>
    <property type="evidence" value="ECO:0007669"/>
    <property type="project" value="InterPro"/>
</dbReference>
<dbReference type="CDD" id="cd00913">
    <property type="entry name" value="PCD_DCoH_subfamily_a"/>
    <property type="match status" value="1"/>
</dbReference>
<dbReference type="Gene3D" id="3.30.1360.20">
    <property type="entry name" value="Transcriptional coactivator/pterin dehydratase"/>
    <property type="match status" value="1"/>
</dbReference>
<dbReference type="HAMAP" id="MF_00434">
    <property type="entry name" value="Pterin_4_alpha"/>
    <property type="match status" value="1"/>
</dbReference>
<dbReference type="InterPro" id="IPR036428">
    <property type="entry name" value="PCD_sf"/>
</dbReference>
<dbReference type="InterPro" id="IPR050376">
    <property type="entry name" value="Pterin-4-alpha-carb_dehyd"/>
</dbReference>
<dbReference type="InterPro" id="IPR001533">
    <property type="entry name" value="Pterin_deHydtase"/>
</dbReference>
<dbReference type="NCBIfam" id="NF002016">
    <property type="entry name" value="PRK00823.1-1"/>
    <property type="match status" value="1"/>
</dbReference>
<dbReference type="PANTHER" id="PTHR42805">
    <property type="entry name" value="PTERIN-4-ALPHA-CARBINOLAMINE DEHYDRATASE-RELATED"/>
    <property type="match status" value="1"/>
</dbReference>
<dbReference type="PANTHER" id="PTHR42805:SF1">
    <property type="entry name" value="PTERIN-4-ALPHA-CARBINOLAMINE DEHYDRATASE-RELATED"/>
    <property type="match status" value="1"/>
</dbReference>
<dbReference type="Pfam" id="PF01329">
    <property type="entry name" value="Pterin_4a"/>
    <property type="match status" value="1"/>
</dbReference>
<dbReference type="SUPFAM" id="SSF55248">
    <property type="entry name" value="PCD-like"/>
    <property type="match status" value="1"/>
</dbReference>
<gene>
    <name type="ordered locus">Noc_2226</name>
</gene>
<proteinExistence type="inferred from homology"/>